<dbReference type="EC" id="7.-.-.-" evidence="1"/>
<dbReference type="EMBL" id="AE005174">
    <property type="protein sequence ID" value="AAG56618.1"/>
    <property type="molecule type" value="Genomic_DNA"/>
</dbReference>
<dbReference type="EMBL" id="BA000007">
    <property type="protein sequence ID" value="BAB35761.1"/>
    <property type="molecule type" value="Genomic_DNA"/>
</dbReference>
<dbReference type="PIR" id="B90921">
    <property type="entry name" value="B90921"/>
</dbReference>
<dbReference type="PIR" id="F85769">
    <property type="entry name" value="F85769"/>
</dbReference>
<dbReference type="RefSeq" id="NP_310365.1">
    <property type="nucleotide sequence ID" value="NC_002695.1"/>
</dbReference>
<dbReference type="SMR" id="P58324"/>
<dbReference type="STRING" id="155864.Z2636"/>
<dbReference type="GeneID" id="913456"/>
<dbReference type="KEGG" id="ece:Z2636"/>
<dbReference type="KEGG" id="ecs:ECs_2338"/>
<dbReference type="PATRIC" id="fig|386585.9.peg.2447"/>
<dbReference type="eggNOG" id="COG4656">
    <property type="taxonomic scope" value="Bacteria"/>
</dbReference>
<dbReference type="HOGENOM" id="CLU_010808_2_1_6"/>
<dbReference type="Proteomes" id="UP000000558">
    <property type="component" value="Chromosome"/>
</dbReference>
<dbReference type="Proteomes" id="UP000002519">
    <property type="component" value="Chromosome"/>
</dbReference>
<dbReference type="GO" id="GO:0005886">
    <property type="term" value="C:plasma membrane"/>
    <property type="evidence" value="ECO:0007669"/>
    <property type="project" value="UniProtKB-SubCell"/>
</dbReference>
<dbReference type="GO" id="GO:0051539">
    <property type="term" value="F:4 iron, 4 sulfur cluster binding"/>
    <property type="evidence" value="ECO:0007669"/>
    <property type="project" value="UniProtKB-KW"/>
</dbReference>
<dbReference type="GO" id="GO:0009055">
    <property type="term" value="F:electron transfer activity"/>
    <property type="evidence" value="ECO:0007669"/>
    <property type="project" value="InterPro"/>
</dbReference>
<dbReference type="GO" id="GO:0046872">
    <property type="term" value="F:metal ion binding"/>
    <property type="evidence" value="ECO:0007669"/>
    <property type="project" value="UniProtKB-KW"/>
</dbReference>
<dbReference type="GO" id="GO:0022900">
    <property type="term" value="P:electron transport chain"/>
    <property type="evidence" value="ECO:0007669"/>
    <property type="project" value="UniProtKB-UniRule"/>
</dbReference>
<dbReference type="Gene3D" id="3.30.70.20">
    <property type="match status" value="1"/>
</dbReference>
<dbReference type="Gene3D" id="3.40.50.11540">
    <property type="entry name" value="NADH-ubiquinone oxidoreductase 51kDa subunit"/>
    <property type="match status" value="1"/>
</dbReference>
<dbReference type="HAMAP" id="MF_00461">
    <property type="entry name" value="RsxC_RnfC"/>
    <property type="match status" value="1"/>
</dbReference>
<dbReference type="InterPro" id="IPR017896">
    <property type="entry name" value="4Fe4S_Fe-S-bd"/>
</dbReference>
<dbReference type="InterPro" id="IPR017900">
    <property type="entry name" value="4Fe4S_Fe_S_CS"/>
</dbReference>
<dbReference type="InterPro" id="IPR010208">
    <property type="entry name" value="Ion_transpt_RnfC/RsxC"/>
</dbReference>
<dbReference type="InterPro" id="IPR011538">
    <property type="entry name" value="Nuo51_FMN-bd"/>
</dbReference>
<dbReference type="InterPro" id="IPR037225">
    <property type="entry name" value="Nuo51_FMN-bd_sf"/>
</dbReference>
<dbReference type="InterPro" id="IPR026902">
    <property type="entry name" value="RnfC_N"/>
</dbReference>
<dbReference type="InterPro" id="IPR019554">
    <property type="entry name" value="Soluble_ligand-bd"/>
</dbReference>
<dbReference type="NCBIfam" id="NF003454">
    <property type="entry name" value="PRK05035.1"/>
    <property type="match status" value="1"/>
</dbReference>
<dbReference type="NCBIfam" id="TIGR01945">
    <property type="entry name" value="rnfC"/>
    <property type="match status" value="1"/>
</dbReference>
<dbReference type="PANTHER" id="PTHR43034">
    <property type="entry name" value="ION-TRANSLOCATING OXIDOREDUCTASE COMPLEX SUBUNIT C"/>
    <property type="match status" value="1"/>
</dbReference>
<dbReference type="PANTHER" id="PTHR43034:SF2">
    <property type="entry name" value="ION-TRANSLOCATING OXIDOREDUCTASE COMPLEX SUBUNIT C"/>
    <property type="match status" value="1"/>
</dbReference>
<dbReference type="Pfam" id="PF01512">
    <property type="entry name" value="Complex1_51K"/>
    <property type="match status" value="1"/>
</dbReference>
<dbReference type="Pfam" id="PF12838">
    <property type="entry name" value="Fer4_7"/>
    <property type="match status" value="1"/>
</dbReference>
<dbReference type="Pfam" id="PF13375">
    <property type="entry name" value="RnfC_N"/>
    <property type="match status" value="1"/>
</dbReference>
<dbReference type="Pfam" id="PF10531">
    <property type="entry name" value="SLBB"/>
    <property type="match status" value="1"/>
</dbReference>
<dbReference type="SUPFAM" id="SSF46548">
    <property type="entry name" value="alpha-helical ferredoxin"/>
    <property type="match status" value="1"/>
</dbReference>
<dbReference type="SUPFAM" id="SSF142019">
    <property type="entry name" value="Nqo1 FMN-binding domain-like"/>
    <property type="match status" value="1"/>
</dbReference>
<dbReference type="PROSITE" id="PS00198">
    <property type="entry name" value="4FE4S_FER_1"/>
    <property type="match status" value="2"/>
</dbReference>
<dbReference type="PROSITE" id="PS51379">
    <property type="entry name" value="4FE4S_FER_2"/>
    <property type="match status" value="2"/>
</dbReference>
<accession>P58324</accession>
<gene>
    <name evidence="1" type="primary">rsxC</name>
    <name type="ordered locus">Z2636</name>
    <name type="ordered locus">ECs2338</name>
</gene>
<protein>
    <recommendedName>
        <fullName evidence="1">Ion-translocating oxidoreductase complex subunit C</fullName>
        <ecNumber evidence="1">7.-.-.-</ecNumber>
    </recommendedName>
    <alternativeName>
        <fullName evidence="1">Rsx electron transport complex subunit C</fullName>
    </alternativeName>
</protein>
<sequence>MLKLFSAFRKNKIWDFNGGIHPPEMKTQSNGTPLRQVPLAQRFVIPLKQHIGAEGELCVSVGDKVLRGQPLTRGRGKMLPVHAPTSGTVTAIAPHSTAHPSALAELSVIIDADGEDCWIPRDGWADYRSRRREELIERIHQFGVAGLGGAGFPTGVKLQGGGDKIETLIINAAECEPYITADDRLMQDCAAQVVEGIRILAHILQPREILIGIEDNKPQAISMLRAVLADSHDISMRVIPTKYPSGGAKQLTYILTGKQVPHGGRSSDIGVLMQNVGTAYAVKRAVIDGEPITERVVTLTGEAIARPGNVWARLGTPVRHLLNDAGFCPSADQMVIMGGPLMGFTLPWLDVPVVKITNCLLAPSANELGEPQEEQSCIRCSACADACPADLLPQQLYWFSKGQQHDKATTHNIADCIECGACAWVCPSNIPLVQYFRQEKAEIAAIRQEEKRAAEAKARFEARLARLEREKAARLERHKSAAVQPAAKDKDAIAAALARVKEKQAQATQPIVIKAGERPDNSAIIAAREARKAQARAKQAELQQTNDAATVTDPRKTAVEAAIARAKARKLEQQQANAEPEQQVDPRKAAVEAAIARAKARKLEQQQANAEPEQQVDPRKAAVEAAIARAKARKLEQQQANAEPEEPVDPRKAAVEAAITRAKARKLEQQQANAEPEEQVDPRKAAVAAAIARAKARKLEQQQANAEPEEQVDPRKAAVAAAIARVQAKKAVQQKVVNED</sequence>
<name>RSXC_ECO57</name>
<evidence type="ECO:0000255" key="1">
    <source>
        <dbReference type="HAMAP-Rule" id="MF_00461"/>
    </source>
</evidence>
<evidence type="ECO:0000256" key="2">
    <source>
        <dbReference type="SAM" id="MobiDB-lite"/>
    </source>
</evidence>
<evidence type="ECO:0000305" key="3"/>
<proteinExistence type="inferred from homology"/>
<keyword id="KW-0004">4Fe-4S</keyword>
<keyword id="KW-0997">Cell inner membrane</keyword>
<keyword id="KW-1003">Cell membrane</keyword>
<keyword id="KW-0249">Electron transport</keyword>
<keyword id="KW-0408">Iron</keyword>
<keyword id="KW-0411">Iron-sulfur</keyword>
<keyword id="KW-0472">Membrane</keyword>
<keyword id="KW-0479">Metal-binding</keyword>
<keyword id="KW-1185">Reference proteome</keyword>
<keyword id="KW-0677">Repeat</keyword>
<keyword id="KW-1278">Translocase</keyword>
<keyword id="KW-0813">Transport</keyword>
<feature type="chain" id="PRO_0000073206" description="Ion-translocating oxidoreductase complex subunit C">
    <location>
        <begin position="1"/>
        <end position="740"/>
    </location>
</feature>
<feature type="domain" description="4Fe-4S ferredoxin-type 1" evidence="1">
    <location>
        <begin position="369"/>
        <end position="397"/>
    </location>
</feature>
<feature type="domain" description="4Fe-4S ferredoxin-type 2" evidence="1">
    <location>
        <begin position="407"/>
        <end position="436"/>
    </location>
</feature>
<feature type="region of interest" description="Disordered" evidence="2">
    <location>
        <begin position="602"/>
        <end position="652"/>
    </location>
</feature>
<feature type="region of interest" description="Disordered" evidence="2">
    <location>
        <begin position="664"/>
        <end position="685"/>
    </location>
</feature>
<feature type="region of interest" description="Disordered" evidence="2">
    <location>
        <begin position="695"/>
        <end position="714"/>
    </location>
</feature>
<feature type="compositionally biased region" description="Low complexity" evidence="2">
    <location>
        <begin position="605"/>
        <end position="615"/>
    </location>
</feature>
<feature type="binding site" evidence="1">
    <location>
        <position position="377"/>
    </location>
    <ligand>
        <name>[4Fe-4S] cluster</name>
        <dbReference type="ChEBI" id="CHEBI:49883"/>
        <label>1</label>
    </ligand>
</feature>
<feature type="binding site" evidence="1">
    <location>
        <position position="380"/>
    </location>
    <ligand>
        <name>[4Fe-4S] cluster</name>
        <dbReference type="ChEBI" id="CHEBI:49883"/>
        <label>1</label>
    </ligand>
</feature>
<feature type="binding site" evidence="1">
    <location>
        <position position="383"/>
    </location>
    <ligand>
        <name>[4Fe-4S] cluster</name>
        <dbReference type="ChEBI" id="CHEBI:49883"/>
        <label>1</label>
    </ligand>
</feature>
<feature type="binding site" evidence="1">
    <location>
        <position position="387"/>
    </location>
    <ligand>
        <name>[4Fe-4S] cluster</name>
        <dbReference type="ChEBI" id="CHEBI:49883"/>
        <label>2</label>
    </ligand>
</feature>
<feature type="binding site" evidence="1">
    <location>
        <position position="416"/>
    </location>
    <ligand>
        <name>[4Fe-4S] cluster</name>
        <dbReference type="ChEBI" id="CHEBI:49883"/>
        <label>2</label>
    </ligand>
</feature>
<feature type="binding site" evidence="1">
    <location>
        <position position="419"/>
    </location>
    <ligand>
        <name>[4Fe-4S] cluster</name>
        <dbReference type="ChEBI" id="CHEBI:49883"/>
        <label>2</label>
    </ligand>
</feature>
<feature type="binding site" evidence="1">
    <location>
        <position position="422"/>
    </location>
    <ligand>
        <name>[4Fe-4S] cluster</name>
        <dbReference type="ChEBI" id="CHEBI:49883"/>
        <label>2</label>
    </ligand>
</feature>
<feature type="binding site" evidence="1">
    <location>
        <position position="426"/>
    </location>
    <ligand>
        <name>[4Fe-4S] cluster</name>
        <dbReference type="ChEBI" id="CHEBI:49883"/>
        <label>1</label>
    </ligand>
</feature>
<feature type="sequence conflict" description="In Ref. 2; BAB35761." evidence="3" ref="2">
    <original>R</original>
    <variation>RKAAVEAAIARAKARKLEQQQANAEPEEPVDPR</variation>
    <location>
        <position position="651"/>
    </location>
</feature>
<reference key="1">
    <citation type="journal article" date="2001" name="Nature">
        <title>Genome sequence of enterohaemorrhagic Escherichia coli O157:H7.</title>
        <authorList>
            <person name="Perna N.T."/>
            <person name="Plunkett G. III"/>
            <person name="Burland V."/>
            <person name="Mau B."/>
            <person name="Glasner J.D."/>
            <person name="Rose D.J."/>
            <person name="Mayhew G.F."/>
            <person name="Evans P.S."/>
            <person name="Gregor J."/>
            <person name="Kirkpatrick H.A."/>
            <person name="Posfai G."/>
            <person name="Hackett J."/>
            <person name="Klink S."/>
            <person name="Boutin A."/>
            <person name="Shao Y."/>
            <person name="Miller L."/>
            <person name="Grotbeck E.J."/>
            <person name="Davis N.W."/>
            <person name="Lim A."/>
            <person name="Dimalanta E.T."/>
            <person name="Potamousis K."/>
            <person name="Apodaca J."/>
            <person name="Anantharaman T.S."/>
            <person name="Lin J."/>
            <person name="Yen G."/>
            <person name="Schwartz D.C."/>
            <person name="Welch R.A."/>
            <person name="Blattner F.R."/>
        </authorList>
    </citation>
    <scope>NUCLEOTIDE SEQUENCE [LARGE SCALE GENOMIC DNA]</scope>
    <source>
        <strain>O157:H7 / EDL933 / ATCC 700927 / EHEC</strain>
    </source>
</reference>
<reference key="2">
    <citation type="journal article" date="2001" name="DNA Res.">
        <title>Complete genome sequence of enterohemorrhagic Escherichia coli O157:H7 and genomic comparison with a laboratory strain K-12.</title>
        <authorList>
            <person name="Hayashi T."/>
            <person name="Makino K."/>
            <person name="Ohnishi M."/>
            <person name="Kurokawa K."/>
            <person name="Ishii K."/>
            <person name="Yokoyama K."/>
            <person name="Han C.-G."/>
            <person name="Ohtsubo E."/>
            <person name="Nakayama K."/>
            <person name="Murata T."/>
            <person name="Tanaka M."/>
            <person name="Tobe T."/>
            <person name="Iida T."/>
            <person name="Takami H."/>
            <person name="Honda T."/>
            <person name="Sasakawa C."/>
            <person name="Ogasawara N."/>
            <person name="Yasunaga T."/>
            <person name="Kuhara S."/>
            <person name="Shiba T."/>
            <person name="Hattori M."/>
            <person name="Shinagawa H."/>
        </authorList>
    </citation>
    <scope>NUCLEOTIDE SEQUENCE [LARGE SCALE GENOMIC DNA]</scope>
    <source>
        <strain>O157:H7 / Sakai / RIMD 0509952 / EHEC</strain>
    </source>
</reference>
<organism>
    <name type="scientific">Escherichia coli O157:H7</name>
    <dbReference type="NCBI Taxonomy" id="83334"/>
    <lineage>
        <taxon>Bacteria</taxon>
        <taxon>Pseudomonadati</taxon>
        <taxon>Pseudomonadota</taxon>
        <taxon>Gammaproteobacteria</taxon>
        <taxon>Enterobacterales</taxon>
        <taxon>Enterobacteriaceae</taxon>
        <taxon>Escherichia</taxon>
    </lineage>
</organism>
<comment type="function">
    <text evidence="1">Part of a membrane-bound complex that couples electron transfer with translocation of ions across the membrane. Required to maintain the reduced state of SoxR.</text>
</comment>
<comment type="cofactor">
    <cofactor evidence="1">
        <name>[4Fe-4S] cluster</name>
        <dbReference type="ChEBI" id="CHEBI:49883"/>
    </cofactor>
    <text evidence="1">Binds 2 [4Fe-4S] clusters per subunit.</text>
</comment>
<comment type="subunit">
    <text evidence="1">The complex is composed of six subunits: RsxA, RsxB, RsxC, RsxD, RsxE and RsxG.</text>
</comment>
<comment type="subcellular location">
    <subcellularLocation>
        <location evidence="1">Cell inner membrane</location>
        <topology evidence="1">Peripheral membrane protein</topology>
    </subcellularLocation>
</comment>
<comment type="similarity">
    <text evidence="1">Belongs to the 4Fe4S bacterial-type ferredoxin family. RnfC subfamily.</text>
</comment>